<keyword id="KW-0064">Aspartyl protease</keyword>
<keyword id="KW-0378">Hydrolase</keyword>
<keyword id="KW-0645">Protease</keyword>
<keyword id="KW-1185">Reference proteome</keyword>
<keyword id="KW-0964">Secreted</keyword>
<keyword id="KW-0843">Virulence</keyword>
<name>PECA_MYCMM</name>
<protein>
    <recommendedName>
        <fullName evidence="4">PE cleavage protein A</fullName>
    </recommendedName>
    <alternativeName>
        <fullName>PE-PGRS family protein</fullName>
    </alternativeName>
</protein>
<dbReference type="EMBL" id="CP000854">
    <property type="protein sequence ID" value="ACC41372.1"/>
    <property type="molecule type" value="Genomic_DNA"/>
</dbReference>
<dbReference type="RefSeq" id="WP_012394630.1">
    <property type="nucleotide sequence ID" value="NC_010612.1"/>
</dbReference>
<dbReference type="SMR" id="B2HE92"/>
<dbReference type="STRING" id="216594.MMAR_2933"/>
<dbReference type="KEGG" id="mmi:MMAR_2933"/>
<dbReference type="eggNOG" id="COG3391">
    <property type="taxonomic scope" value="Bacteria"/>
</dbReference>
<dbReference type="HOGENOM" id="CLU_038249_0_0_11"/>
<dbReference type="OrthoDB" id="5190013at2"/>
<dbReference type="PHI-base" id="PHI:9597"/>
<dbReference type="Proteomes" id="UP000001190">
    <property type="component" value="Chromosome"/>
</dbReference>
<dbReference type="GO" id="GO:0009986">
    <property type="term" value="C:cell surface"/>
    <property type="evidence" value="ECO:0007669"/>
    <property type="project" value="UniProtKB-SubCell"/>
</dbReference>
<dbReference type="GO" id="GO:0005576">
    <property type="term" value="C:extracellular region"/>
    <property type="evidence" value="ECO:0007669"/>
    <property type="project" value="UniProtKB-SubCell"/>
</dbReference>
<dbReference type="GO" id="GO:0004190">
    <property type="term" value="F:aspartic-type endopeptidase activity"/>
    <property type="evidence" value="ECO:0007669"/>
    <property type="project" value="UniProtKB-KW"/>
</dbReference>
<dbReference type="GO" id="GO:0006508">
    <property type="term" value="P:proteolysis"/>
    <property type="evidence" value="ECO:0007669"/>
    <property type="project" value="UniProtKB-KW"/>
</dbReference>
<dbReference type="Gene3D" id="2.40.70.10">
    <property type="entry name" value="Acid Proteases"/>
    <property type="match status" value="1"/>
</dbReference>
<dbReference type="Gene3D" id="1.10.287.850">
    <property type="entry name" value="HP0062-like domain"/>
    <property type="match status" value="1"/>
</dbReference>
<dbReference type="InterPro" id="IPR000084">
    <property type="entry name" value="PE-PGRS_N"/>
</dbReference>
<dbReference type="InterPro" id="IPR048054">
    <property type="entry name" value="PecA_C"/>
</dbReference>
<dbReference type="InterPro" id="IPR021109">
    <property type="entry name" value="Peptidase_aspartic_dom_sf"/>
</dbReference>
<dbReference type="InterPro" id="IPR048996">
    <property type="entry name" value="PGRS_rpt"/>
</dbReference>
<dbReference type="NCBIfam" id="NF038019">
    <property type="entry name" value="PE_process_PecA"/>
    <property type="match status" value="1"/>
</dbReference>
<dbReference type="Pfam" id="PF00934">
    <property type="entry name" value="PE"/>
    <property type="match status" value="1"/>
</dbReference>
<dbReference type="Pfam" id="PF20729">
    <property type="entry name" value="PE-PGRS_C"/>
    <property type="match status" value="1"/>
</dbReference>
<dbReference type="Pfam" id="PF21526">
    <property type="entry name" value="PGRS"/>
    <property type="match status" value="1"/>
</dbReference>
<dbReference type="SUPFAM" id="SSF140459">
    <property type="entry name" value="PE/PPE dimer-like"/>
    <property type="match status" value="1"/>
</dbReference>
<gene>
    <name evidence="4" type="primary">pecA</name>
    <name evidence="7" type="ordered locus">MMAR_2933</name>
</gene>
<organism>
    <name type="scientific">Mycobacterium marinum (strain ATCC BAA-535 / M)</name>
    <dbReference type="NCBI Taxonomy" id="216594"/>
    <lineage>
        <taxon>Bacteria</taxon>
        <taxon>Bacillati</taxon>
        <taxon>Actinomycetota</taxon>
        <taxon>Actinomycetes</taxon>
        <taxon>Mycobacteriales</taxon>
        <taxon>Mycobacteriaceae</taxon>
        <taxon>Mycobacterium</taxon>
        <taxon>Mycobacterium ulcerans group</taxon>
    </lineage>
</organism>
<proteinExistence type="evidence at protein level"/>
<accession>B2HE92</accession>
<sequence length="553" mass="53298">MSLLVVAPEWLTSAAAELQSIESALSAANAAAAVPTTGLAAAAADEVSTAVATLFAGFGQEYQAISTQLSAFQQQFALTLNSSAGSYSAAEAQSVSILDTLGQDVFGAINAPTEALLGRPLIGNGANGTATSPNGGAGGLLFGNGGIGYSQTGAGIVGGAGGSAGLIGNGGAGGTGGAGATGGAGGNGGWLFGSGGIGGTGGANALGTGGTGGLGGSAGLFGGGGNGGAGGLGISGDLGTGGAGGTGGFLLGDYGVSGAGGDGRTVPLEVVNVTEPVVNVNVNGGHSTPVLIDTGSAGLVMQVKDVGGPLGLLRMGLPSGISMSAYSGGLTYLFATYPTTVDFGNGIVTSTTGVDVVLFSIPTSPYALTTWLNALWSNPLTTPFDAYFQSAGVDGVLGVGPNAVGPGPSIPTQALGGGLGQGLLIDMKGGELVFGPNPLTPEFSISGAPIATLWVSVNGGAPVAVPSIIDSGGVMGTIPSSVIGGSTLPANTNITVYTDNTMTTEVYHYSTNDYQPTVISSGLMNTGFLPFWNQPVYIDYSPAGTGTTVFDMP</sequence>
<feature type="chain" id="PRO_0000449880" description="PE cleavage protein A">
    <location>
        <begin position="1"/>
        <end position="553"/>
    </location>
</feature>
<feature type="domain" description="PE" evidence="1">
    <location>
        <begin position="1"/>
        <end position="92"/>
    </location>
</feature>
<feature type="active site" evidence="6">
    <location>
        <position position="293"/>
    </location>
</feature>
<feature type="mutagenesis site" description="Loss of activity." evidence="3">
    <original>D</original>
    <variation>G</variation>
    <location>
        <position position="293"/>
    </location>
</feature>
<evidence type="ECO:0000255" key="1"/>
<evidence type="ECO:0000269" key="2">
    <source>
    </source>
</evidence>
<evidence type="ECO:0000269" key="3">
    <source>
    </source>
</evidence>
<evidence type="ECO:0000303" key="4">
    <source>
    </source>
</evidence>
<evidence type="ECO:0000305" key="5"/>
<evidence type="ECO:0000305" key="6">
    <source>
    </source>
</evidence>
<evidence type="ECO:0000312" key="7">
    <source>
        <dbReference type="EMBL" id="ACC41372.1"/>
    </source>
</evidence>
<comment type="function">
    <text evidence="3">Aspartic protease that processes the lipase LipY and other PE_PGRS proteins. Can also cleave itself. Cleaves LipY both inside the PE domain, before amino acid 98, and after amino acids 136 and 149. Involved in virulence.</text>
</comment>
<comment type="subcellular location">
    <subcellularLocation>
        <location evidence="2">Secreted</location>
    </subcellularLocation>
    <subcellularLocation>
        <location evidence="3">Cell surface</location>
    </subcellularLocation>
    <text evidence="2">Secreted via the ESX-5 / type VII secretion system (T7SS).</text>
</comment>
<comment type="PTM">
    <text evidence="3">Undergoes auto-proteolytic processing.</text>
</comment>
<comment type="disruption phenotype">
    <text evidence="3">Disruption of the gene does not affect LipY surface localization. Mutant shows moderate attenuation in the zebrafish larva infection model.</text>
</comment>
<comment type="similarity">
    <text evidence="5">Belongs to the mycobacterial PE family. PGRS subfamily.</text>
</comment>
<reference key="1">
    <citation type="journal article" date="2008" name="Genome Res.">
        <title>Insights from the complete genome sequence of Mycobacterium marinum on the evolution of Mycobacterium tuberculosis.</title>
        <authorList>
            <person name="Stinear T.P."/>
            <person name="Seemann T."/>
            <person name="Harrison P.F."/>
            <person name="Jenkin G.A."/>
            <person name="Davies J.K."/>
            <person name="Johnson P.D."/>
            <person name="Abdellah Z."/>
            <person name="Arrowsmith C."/>
            <person name="Chillingworth T."/>
            <person name="Churcher C."/>
            <person name="Clarke K."/>
            <person name="Cronin A."/>
            <person name="Davis P."/>
            <person name="Goodhead I."/>
            <person name="Holroyd N."/>
            <person name="Jagels K."/>
            <person name="Lord A."/>
            <person name="Moule S."/>
            <person name="Mungall K."/>
            <person name="Norbertczak H."/>
            <person name="Quail M.A."/>
            <person name="Rabbinowitsch E."/>
            <person name="Walker D."/>
            <person name="White B."/>
            <person name="Whitehead S."/>
            <person name="Small P.L."/>
            <person name="Brosch R."/>
            <person name="Ramakrishnan L."/>
            <person name="Fischbach M.A."/>
            <person name="Parkhill J."/>
            <person name="Cole S.T."/>
        </authorList>
    </citation>
    <scope>NUCLEOTIDE SEQUENCE [LARGE SCALE GENOMIC DNA]</scope>
    <source>
        <strain>ATCC BAA-535 / M</strain>
    </source>
</reference>
<reference key="2">
    <citation type="journal article" date="2009" name="Mol. Microbiol.">
        <title>PPE and PE_PGRS proteins of Mycobacterium marinum are transported via the type VII secretion system ESX-5.</title>
        <authorList>
            <person name="Abdallah A.M."/>
            <person name="Verboom T."/>
            <person name="Weerdenburg E.M."/>
            <person name="Gey van Pittius N.C."/>
            <person name="Mahasha P.W."/>
            <person name="Jimenez C."/>
            <person name="Parra M."/>
            <person name="Cadieux N."/>
            <person name="Brennan M.J."/>
            <person name="Appelmelk B.J."/>
            <person name="Bitter W."/>
        </authorList>
    </citation>
    <scope>SUBCELLULAR LOCATION</scope>
</reference>
<reference key="3">
    <citation type="journal article" date="2019" name="MBio">
        <title>Type VII secretion substrates of pathogenic Mycobacteria are processed by a surface protease.</title>
        <authorList>
            <person name="Burggraaf M.J."/>
            <person name="Speer A."/>
            <person name="Meijers A.S."/>
            <person name="Ummels R."/>
            <person name="van der Sar A.M."/>
            <person name="Korotkov K.V."/>
            <person name="Bitter W."/>
            <person name="Kuijl C."/>
        </authorList>
    </citation>
    <scope>FUNCTION</scope>
    <scope>SUBCELLULAR LOCATION</scope>
    <scope>PROTEOLYTIC CLEAVAGE</scope>
    <scope>DISRUPTION PHENOTYPE</scope>
    <scope>MUTAGENESIS OF ASP-293</scope>
    <scope>ACTIVE SITE</scope>
</reference>